<reference key="1">
    <citation type="journal article" date="2007" name="PLoS ONE">
        <title>Analysis of the neurotoxin complex genes in Clostridium botulinum A1-A4 and B1 strains: BoNT/A3, /Ba4 and /B1 clusters are located within plasmids.</title>
        <authorList>
            <person name="Smith T.J."/>
            <person name="Hill K.K."/>
            <person name="Foley B.T."/>
            <person name="Detter J.C."/>
            <person name="Munk A.C."/>
            <person name="Bruce D.C."/>
            <person name="Doggett N.A."/>
            <person name="Smith L.A."/>
            <person name="Marks J.D."/>
            <person name="Xie G."/>
            <person name="Brettin T.S."/>
        </authorList>
    </citation>
    <scope>NUCLEOTIDE SEQUENCE [LARGE SCALE GENOMIC DNA]</scope>
    <source>
        <strain>Loch Maree / Type A3</strain>
    </source>
</reference>
<proteinExistence type="inferred from homology"/>
<sequence>MYTTGLIGKNINYSESPEIHNNYYKKNNIPFFYKIFNLNQDQIDYFIKNLHKNNIKGFNVTIPYKETILQYLNDIVYPADKIGAVNTVVVQEDKLIGYNTDYIGFIKSLQYYNIQVKNFKCLIIGSGGSAKCIYYALKELNAGDICIVSRNPEKARLKFEKKVKILNIKDENKLDRYDLIVNCTPIGGPNFREQKPVKLKEVKKNCVVYDLNYTPKRSKLLKEAKENGAFIINGEKMLIFQAYSAIGLWCLNGIKGGR</sequence>
<comment type="function">
    <text evidence="1">Involved in the biosynthesis of the chorismate, which leads to the biosynthesis of aromatic amino acids. Catalyzes the reversible NADPH linked reduction of 3-dehydroshikimate (DHSA) to yield shikimate (SA).</text>
</comment>
<comment type="catalytic activity">
    <reaction evidence="1">
        <text>shikimate + NADP(+) = 3-dehydroshikimate + NADPH + H(+)</text>
        <dbReference type="Rhea" id="RHEA:17737"/>
        <dbReference type="ChEBI" id="CHEBI:15378"/>
        <dbReference type="ChEBI" id="CHEBI:16630"/>
        <dbReference type="ChEBI" id="CHEBI:36208"/>
        <dbReference type="ChEBI" id="CHEBI:57783"/>
        <dbReference type="ChEBI" id="CHEBI:58349"/>
        <dbReference type="EC" id="1.1.1.25"/>
    </reaction>
</comment>
<comment type="pathway">
    <text evidence="1">Metabolic intermediate biosynthesis; chorismate biosynthesis; chorismate from D-erythrose 4-phosphate and phosphoenolpyruvate: step 4/7.</text>
</comment>
<comment type="subunit">
    <text evidence="1">Homodimer.</text>
</comment>
<comment type="similarity">
    <text evidence="1">Belongs to the shikimate dehydrogenase family.</text>
</comment>
<gene>
    <name evidence="1" type="primary">aroE</name>
    <name type="ordered locus">CLK_1923</name>
</gene>
<dbReference type="EC" id="1.1.1.25" evidence="1"/>
<dbReference type="EMBL" id="CP000962">
    <property type="protein sequence ID" value="ACA56221.1"/>
    <property type="molecule type" value="Genomic_DNA"/>
</dbReference>
<dbReference type="RefSeq" id="WP_012344116.1">
    <property type="nucleotide sequence ID" value="NC_010520.1"/>
</dbReference>
<dbReference type="SMR" id="B1KX91"/>
<dbReference type="KEGG" id="cbl:CLK_1923"/>
<dbReference type="HOGENOM" id="CLU_044063_4_1_9"/>
<dbReference type="UniPathway" id="UPA00053">
    <property type="reaction ID" value="UER00087"/>
</dbReference>
<dbReference type="GO" id="GO:0005829">
    <property type="term" value="C:cytosol"/>
    <property type="evidence" value="ECO:0007669"/>
    <property type="project" value="TreeGrafter"/>
</dbReference>
<dbReference type="GO" id="GO:0050661">
    <property type="term" value="F:NADP binding"/>
    <property type="evidence" value="ECO:0007669"/>
    <property type="project" value="InterPro"/>
</dbReference>
<dbReference type="GO" id="GO:0004764">
    <property type="term" value="F:shikimate 3-dehydrogenase (NADP+) activity"/>
    <property type="evidence" value="ECO:0007669"/>
    <property type="project" value="UniProtKB-UniRule"/>
</dbReference>
<dbReference type="GO" id="GO:0008652">
    <property type="term" value="P:amino acid biosynthetic process"/>
    <property type="evidence" value="ECO:0007669"/>
    <property type="project" value="UniProtKB-KW"/>
</dbReference>
<dbReference type="GO" id="GO:0009073">
    <property type="term" value="P:aromatic amino acid family biosynthetic process"/>
    <property type="evidence" value="ECO:0007669"/>
    <property type="project" value="UniProtKB-KW"/>
</dbReference>
<dbReference type="GO" id="GO:0009423">
    <property type="term" value="P:chorismate biosynthetic process"/>
    <property type="evidence" value="ECO:0007669"/>
    <property type="project" value="UniProtKB-UniRule"/>
</dbReference>
<dbReference type="GO" id="GO:0019632">
    <property type="term" value="P:shikimate metabolic process"/>
    <property type="evidence" value="ECO:0007669"/>
    <property type="project" value="InterPro"/>
</dbReference>
<dbReference type="CDD" id="cd01065">
    <property type="entry name" value="NAD_bind_Shikimate_DH"/>
    <property type="match status" value="1"/>
</dbReference>
<dbReference type="Gene3D" id="3.40.50.10860">
    <property type="entry name" value="Leucine Dehydrogenase, chain A, domain 1"/>
    <property type="match status" value="1"/>
</dbReference>
<dbReference type="Gene3D" id="3.40.50.720">
    <property type="entry name" value="NAD(P)-binding Rossmann-like Domain"/>
    <property type="match status" value="1"/>
</dbReference>
<dbReference type="HAMAP" id="MF_00222">
    <property type="entry name" value="Shikimate_DH_AroE"/>
    <property type="match status" value="1"/>
</dbReference>
<dbReference type="InterPro" id="IPR046346">
    <property type="entry name" value="Aminoacid_DH-like_N_sf"/>
</dbReference>
<dbReference type="InterPro" id="IPR036291">
    <property type="entry name" value="NAD(P)-bd_dom_sf"/>
</dbReference>
<dbReference type="InterPro" id="IPR011342">
    <property type="entry name" value="Shikimate_DH"/>
</dbReference>
<dbReference type="InterPro" id="IPR013708">
    <property type="entry name" value="Shikimate_DH-bd_N"/>
</dbReference>
<dbReference type="InterPro" id="IPR022893">
    <property type="entry name" value="Shikimate_DH_fam"/>
</dbReference>
<dbReference type="NCBIfam" id="TIGR00507">
    <property type="entry name" value="aroE"/>
    <property type="match status" value="1"/>
</dbReference>
<dbReference type="PANTHER" id="PTHR21089:SF1">
    <property type="entry name" value="BIFUNCTIONAL 3-DEHYDROQUINATE DEHYDRATASE_SHIKIMATE DEHYDROGENASE, CHLOROPLASTIC"/>
    <property type="match status" value="1"/>
</dbReference>
<dbReference type="PANTHER" id="PTHR21089">
    <property type="entry name" value="SHIKIMATE DEHYDROGENASE"/>
    <property type="match status" value="1"/>
</dbReference>
<dbReference type="Pfam" id="PF08501">
    <property type="entry name" value="Shikimate_dh_N"/>
    <property type="match status" value="1"/>
</dbReference>
<dbReference type="SUPFAM" id="SSF53223">
    <property type="entry name" value="Aminoacid dehydrogenase-like, N-terminal domain"/>
    <property type="match status" value="1"/>
</dbReference>
<dbReference type="SUPFAM" id="SSF51735">
    <property type="entry name" value="NAD(P)-binding Rossmann-fold domains"/>
    <property type="match status" value="1"/>
</dbReference>
<organism>
    <name type="scientific">Clostridium botulinum (strain Loch Maree / Type A3)</name>
    <dbReference type="NCBI Taxonomy" id="498214"/>
    <lineage>
        <taxon>Bacteria</taxon>
        <taxon>Bacillati</taxon>
        <taxon>Bacillota</taxon>
        <taxon>Clostridia</taxon>
        <taxon>Eubacteriales</taxon>
        <taxon>Clostridiaceae</taxon>
        <taxon>Clostridium</taxon>
    </lineage>
</organism>
<feature type="chain" id="PRO_1000204259" description="Shikimate dehydrogenase (NADP(+))">
    <location>
        <begin position="1"/>
        <end position="258"/>
    </location>
</feature>
<feature type="active site" description="Proton acceptor" evidence="1">
    <location>
        <position position="65"/>
    </location>
</feature>
<feature type="binding site" evidence="1">
    <location>
        <begin position="14"/>
        <end position="16"/>
    </location>
    <ligand>
        <name>shikimate</name>
        <dbReference type="ChEBI" id="CHEBI:36208"/>
    </ligand>
</feature>
<feature type="binding site" evidence="1">
    <location>
        <position position="61"/>
    </location>
    <ligand>
        <name>shikimate</name>
        <dbReference type="ChEBI" id="CHEBI:36208"/>
    </ligand>
</feature>
<feature type="binding site" evidence="1">
    <location>
        <position position="86"/>
    </location>
    <ligand>
        <name>shikimate</name>
        <dbReference type="ChEBI" id="CHEBI:36208"/>
    </ligand>
</feature>
<feature type="binding site" evidence="1">
    <location>
        <position position="101"/>
    </location>
    <ligand>
        <name>shikimate</name>
        <dbReference type="ChEBI" id="CHEBI:36208"/>
    </ligand>
</feature>
<feature type="binding site" evidence="1">
    <location>
        <begin position="125"/>
        <end position="129"/>
    </location>
    <ligand>
        <name>NADP(+)</name>
        <dbReference type="ChEBI" id="CHEBI:58349"/>
    </ligand>
</feature>
<feature type="binding site" evidence="1">
    <location>
        <position position="211"/>
    </location>
    <ligand>
        <name>NADP(+)</name>
        <dbReference type="ChEBI" id="CHEBI:58349"/>
    </ligand>
</feature>
<feature type="binding site" evidence="1">
    <location>
        <position position="213"/>
    </location>
    <ligand>
        <name>shikimate</name>
        <dbReference type="ChEBI" id="CHEBI:36208"/>
    </ligand>
</feature>
<feature type="binding site" evidence="1">
    <location>
        <position position="234"/>
    </location>
    <ligand>
        <name>NADP(+)</name>
        <dbReference type="ChEBI" id="CHEBI:58349"/>
    </ligand>
</feature>
<accession>B1KX91</accession>
<name>AROE_CLOBM</name>
<evidence type="ECO:0000255" key="1">
    <source>
        <dbReference type="HAMAP-Rule" id="MF_00222"/>
    </source>
</evidence>
<protein>
    <recommendedName>
        <fullName evidence="1">Shikimate dehydrogenase (NADP(+))</fullName>
        <shortName evidence="1">SDH</shortName>
        <ecNumber evidence="1">1.1.1.25</ecNumber>
    </recommendedName>
</protein>
<keyword id="KW-0028">Amino-acid biosynthesis</keyword>
<keyword id="KW-0057">Aromatic amino acid biosynthesis</keyword>
<keyword id="KW-0521">NADP</keyword>
<keyword id="KW-0560">Oxidoreductase</keyword>